<organism>
    <name type="scientific">Yersinia pestis bv. Antiqua (strain Angola)</name>
    <dbReference type="NCBI Taxonomy" id="349746"/>
    <lineage>
        <taxon>Bacteria</taxon>
        <taxon>Pseudomonadati</taxon>
        <taxon>Pseudomonadota</taxon>
        <taxon>Gammaproteobacteria</taxon>
        <taxon>Enterobacterales</taxon>
        <taxon>Yersiniaceae</taxon>
        <taxon>Yersinia</taxon>
    </lineage>
</organism>
<feature type="chain" id="PRO_1000090047" description="tRNA sulfurtransferase">
    <location>
        <begin position="1"/>
        <end position="483"/>
    </location>
</feature>
<feature type="domain" description="THUMP" evidence="1">
    <location>
        <begin position="62"/>
        <end position="166"/>
    </location>
</feature>
<feature type="domain" description="Rhodanese" evidence="1">
    <location>
        <begin position="405"/>
        <end position="483"/>
    </location>
</feature>
<feature type="active site" description="Cysteine persulfide intermediate" evidence="1">
    <location>
        <position position="457"/>
    </location>
</feature>
<feature type="binding site" evidence="1">
    <location>
        <begin position="184"/>
        <end position="185"/>
    </location>
    <ligand>
        <name>ATP</name>
        <dbReference type="ChEBI" id="CHEBI:30616"/>
    </ligand>
</feature>
<feature type="binding site" evidence="1">
    <location>
        <position position="266"/>
    </location>
    <ligand>
        <name>ATP</name>
        <dbReference type="ChEBI" id="CHEBI:30616"/>
    </ligand>
</feature>
<feature type="binding site" evidence="1">
    <location>
        <position position="288"/>
    </location>
    <ligand>
        <name>ATP</name>
        <dbReference type="ChEBI" id="CHEBI:30616"/>
    </ligand>
</feature>
<feature type="binding site" evidence="1">
    <location>
        <position position="297"/>
    </location>
    <ligand>
        <name>ATP</name>
        <dbReference type="ChEBI" id="CHEBI:30616"/>
    </ligand>
</feature>
<feature type="disulfide bond" description="Redox-active" evidence="1">
    <location>
        <begin position="345"/>
        <end position="457"/>
    </location>
</feature>
<evidence type="ECO:0000255" key="1">
    <source>
        <dbReference type="HAMAP-Rule" id="MF_00021"/>
    </source>
</evidence>
<reference key="1">
    <citation type="journal article" date="2010" name="J. Bacteriol.">
        <title>Genome sequence of the deep-rooted Yersinia pestis strain Angola reveals new insights into the evolution and pangenome of the plague bacterium.</title>
        <authorList>
            <person name="Eppinger M."/>
            <person name="Worsham P.L."/>
            <person name="Nikolich M.P."/>
            <person name="Riley D.R."/>
            <person name="Sebastian Y."/>
            <person name="Mou S."/>
            <person name="Achtman M."/>
            <person name="Lindler L.E."/>
            <person name="Ravel J."/>
        </authorList>
    </citation>
    <scope>NUCLEOTIDE SEQUENCE [LARGE SCALE GENOMIC DNA]</scope>
    <source>
        <strain>Angola</strain>
    </source>
</reference>
<sequence>MKFIIKLFPEITIKSQSVRLRFIKILTTNIRNVLKHLEDDTLAIVRHWDHIELRTKDDNLGPEICDALTRIPGIHHILEVEDRSYSDMHNIFEQTLEAYRETLVGKTFCVRVKRRGKHEFSSGDVERYVGGGLNQHIESAKVNLTRPQVTVNLEVDQDKLILVKARHEGLGGFPIGTQEDVLSLISGGFDSGVSSYMLMRRGCRVHYCFFNLGGSAHEIGVKQVAHYLWNRFGSSHRVRFIAIDFEPVVGEILEKVEDGQMGVVLKRMMVRAASQVAERYGVQALVTGEALGQVSSQTLTNLRLIDNASDTLILRPLISHDKEHIINLARQIGTEDFAKTMPEYCGVISKSPTVKAVKAKIEEEESHFDFSILDRVVSEAKNVDIREIAQQSREQVVEVETVAELADTDVLLDIRAPDEQEEKPLKLDQVEVRSLPFYKLSSQFADLDQSKTYLLYCDRGVMSRLQALYLREQGYTNVKVYRP</sequence>
<proteinExistence type="inferred from homology"/>
<gene>
    <name evidence="1" type="primary">thiI</name>
    <name type="ordered locus">YpAngola_A3070</name>
</gene>
<comment type="function">
    <text evidence="1">Catalyzes the ATP-dependent transfer of a sulfur to tRNA to produce 4-thiouridine in position 8 of tRNAs, which functions as a near-UV photosensor. Also catalyzes the transfer of sulfur to the sulfur carrier protein ThiS, forming ThiS-thiocarboxylate. This is a step in the synthesis of thiazole, in the thiamine biosynthesis pathway. The sulfur is donated as persulfide by IscS.</text>
</comment>
<comment type="catalytic activity">
    <reaction evidence="1">
        <text>[ThiI sulfur-carrier protein]-S-sulfanyl-L-cysteine + a uridine in tRNA + 2 reduced [2Fe-2S]-[ferredoxin] + ATP + H(+) = [ThiI sulfur-carrier protein]-L-cysteine + a 4-thiouridine in tRNA + 2 oxidized [2Fe-2S]-[ferredoxin] + AMP + diphosphate</text>
        <dbReference type="Rhea" id="RHEA:24176"/>
        <dbReference type="Rhea" id="RHEA-COMP:10000"/>
        <dbReference type="Rhea" id="RHEA-COMP:10001"/>
        <dbReference type="Rhea" id="RHEA-COMP:13337"/>
        <dbReference type="Rhea" id="RHEA-COMP:13338"/>
        <dbReference type="Rhea" id="RHEA-COMP:13339"/>
        <dbReference type="Rhea" id="RHEA-COMP:13340"/>
        <dbReference type="ChEBI" id="CHEBI:15378"/>
        <dbReference type="ChEBI" id="CHEBI:29950"/>
        <dbReference type="ChEBI" id="CHEBI:30616"/>
        <dbReference type="ChEBI" id="CHEBI:33019"/>
        <dbReference type="ChEBI" id="CHEBI:33737"/>
        <dbReference type="ChEBI" id="CHEBI:33738"/>
        <dbReference type="ChEBI" id="CHEBI:61963"/>
        <dbReference type="ChEBI" id="CHEBI:65315"/>
        <dbReference type="ChEBI" id="CHEBI:136798"/>
        <dbReference type="ChEBI" id="CHEBI:456215"/>
        <dbReference type="EC" id="2.8.1.4"/>
    </reaction>
</comment>
<comment type="catalytic activity">
    <reaction evidence="1">
        <text>[ThiS sulfur-carrier protein]-C-terminal Gly-Gly-AMP + S-sulfanyl-L-cysteinyl-[cysteine desulfurase] + AH2 = [ThiS sulfur-carrier protein]-C-terminal-Gly-aminoethanethioate + L-cysteinyl-[cysteine desulfurase] + A + AMP + 2 H(+)</text>
        <dbReference type="Rhea" id="RHEA:43340"/>
        <dbReference type="Rhea" id="RHEA-COMP:12157"/>
        <dbReference type="Rhea" id="RHEA-COMP:12158"/>
        <dbReference type="Rhea" id="RHEA-COMP:12910"/>
        <dbReference type="Rhea" id="RHEA-COMP:19908"/>
        <dbReference type="ChEBI" id="CHEBI:13193"/>
        <dbReference type="ChEBI" id="CHEBI:15378"/>
        <dbReference type="ChEBI" id="CHEBI:17499"/>
        <dbReference type="ChEBI" id="CHEBI:29950"/>
        <dbReference type="ChEBI" id="CHEBI:61963"/>
        <dbReference type="ChEBI" id="CHEBI:90618"/>
        <dbReference type="ChEBI" id="CHEBI:232372"/>
        <dbReference type="ChEBI" id="CHEBI:456215"/>
    </reaction>
</comment>
<comment type="pathway">
    <text evidence="1">Cofactor biosynthesis; thiamine diphosphate biosynthesis.</text>
</comment>
<comment type="subcellular location">
    <subcellularLocation>
        <location evidence="1">Cytoplasm</location>
    </subcellularLocation>
</comment>
<comment type="similarity">
    <text evidence="1">Belongs to the ThiI family.</text>
</comment>
<keyword id="KW-0067">ATP-binding</keyword>
<keyword id="KW-0963">Cytoplasm</keyword>
<keyword id="KW-1015">Disulfide bond</keyword>
<keyword id="KW-0547">Nucleotide-binding</keyword>
<keyword id="KW-0676">Redox-active center</keyword>
<keyword id="KW-0694">RNA-binding</keyword>
<keyword id="KW-0784">Thiamine biosynthesis</keyword>
<keyword id="KW-0808">Transferase</keyword>
<keyword id="KW-0820">tRNA-binding</keyword>
<name>THII_YERPG</name>
<protein>
    <recommendedName>
        <fullName evidence="1">tRNA sulfurtransferase</fullName>
        <ecNumber evidence="1">2.8.1.4</ecNumber>
    </recommendedName>
    <alternativeName>
        <fullName evidence="1">Sulfur carrier protein ThiS sulfurtransferase</fullName>
    </alternativeName>
    <alternativeName>
        <fullName evidence="1">Thiamine biosynthesis protein ThiI</fullName>
    </alternativeName>
    <alternativeName>
        <fullName evidence="1">tRNA 4-thiouridine synthase</fullName>
    </alternativeName>
</protein>
<accession>A9QZR9</accession>
<dbReference type="EC" id="2.8.1.4" evidence="1"/>
<dbReference type="EMBL" id="CP000901">
    <property type="protein sequence ID" value="ABX88049.1"/>
    <property type="molecule type" value="Genomic_DNA"/>
</dbReference>
<dbReference type="RefSeq" id="WP_002208658.1">
    <property type="nucleotide sequence ID" value="NZ_CP009935.1"/>
</dbReference>
<dbReference type="SMR" id="A9QZR9"/>
<dbReference type="GeneID" id="57975539"/>
<dbReference type="KEGG" id="ypg:YpAngola_A3070"/>
<dbReference type="PATRIC" id="fig|349746.12.peg.4126"/>
<dbReference type="UniPathway" id="UPA00060"/>
<dbReference type="GO" id="GO:0005829">
    <property type="term" value="C:cytosol"/>
    <property type="evidence" value="ECO:0007669"/>
    <property type="project" value="TreeGrafter"/>
</dbReference>
<dbReference type="GO" id="GO:0005524">
    <property type="term" value="F:ATP binding"/>
    <property type="evidence" value="ECO:0007669"/>
    <property type="project" value="UniProtKB-UniRule"/>
</dbReference>
<dbReference type="GO" id="GO:0004810">
    <property type="term" value="F:CCA tRNA nucleotidyltransferase activity"/>
    <property type="evidence" value="ECO:0007669"/>
    <property type="project" value="InterPro"/>
</dbReference>
<dbReference type="GO" id="GO:0000049">
    <property type="term" value="F:tRNA binding"/>
    <property type="evidence" value="ECO:0007669"/>
    <property type="project" value="UniProtKB-UniRule"/>
</dbReference>
<dbReference type="GO" id="GO:0140741">
    <property type="term" value="F:tRNA-uracil-4 sulfurtransferase activity"/>
    <property type="evidence" value="ECO:0007669"/>
    <property type="project" value="UniProtKB-EC"/>
</dbReference>
<dbReference type="GO" id="GO:0009228">
    <property type="term" value="P:thiamine biosynthetic process"/>
    <property type="evidence" value="ECO:0007669"/>
    <property type="project" value="UniProtKB-KW"/>
</dbReference>
<dbReference type="GO" id="GO:0009229">
    <property type="term" value="P:thiamine diphosphate biosynthetic process"/>
    <property type="evidence" value="ECO:0007669"/>
    <property type="project" value="UniProtKB-UniRule"/>
</dbReference>
<dbReference type="GO" id="GO:0052837">
    <property type="term" value="P:thiazole biosynthetic process"/>
    <property type="evidence" value="ECO:0007669"/>
    <property type="project" value="InterPro"/>
</dbReference>
<dbReference type="GO" id="GO:0002937">
    <property type="term" value="P:tRNA 4-thiouridine biosynthesis"/>
    <property type="evidence" value="ECO:0007669"/>
    <property type="project" value="TreeGrafter"/>
</dbReference>
<dbReference type="CDD" id="cd01712">
    <property type="entry name" value="PPase_ThiI"/>
    <property type="match status" value="1"/>
</dbReference>
<dbReference type="CDD" id="cd00158">
    <property type="entry name" value="RHOD"/>
    <property type="match status" value="1"/>
</dbReference>
<dbReference type="CDD" id="cd11716">
    <property type="entry name" value="THUMP_ThiI"/>
    <property type="match status" value="1"/>
</dbReference>
<dbReference type="FunFam" id="3.30.2130.30:FF:000002">
    <property type="entry name" value="tRNA sulfurtransferase"/>
    <property type="match status" value="1"/>
</dbReference>
<dbReference type="FunFam" id="3.40.250.10:FF:000003">
    <property type="entry name" value="tRNA sulfurtransferase"/>
    <property type="match status" value="1"/>
</dbReference>
<dbReference type="FunFam" id="3.40.50.620:FF:000029">
    <property type="entry name" value="tRNA sulfurtransferase"/>
    <property type="match status" value="1"/>
</dbReference>
<dbReference type="Gene3D" id="3.30.2130.30">
    <property type="match status" value="1"/>
</dbReference>
<dbReference type="Gene3D" id="3.40.50.620">
    <property type="entry name" value="HUPs"/>
    <property type="match status" value="1"/>
</dbReference>
<dbReference type="Gene3D" id="3.40.250.10">
    <property type="entry name" value="Rhodanese-like domain"/>
    <property type="match status" value="1"/>
</dbReference>
<dbReference type="HAMAP" id="MF_00021">
    <property type="entry name" value="ThiI"/>
    <property type="match status" value="1"/>
</dbReference>
<dbReference type="InterPro" id="IPR001763">
    <property type="entry name" value="Rhodanese-like_dom"/>
</dbReference>
<dbReference type="InterPro" id="IPR036873">
    <property type="entry name" value="Rhodanese-like_dom_sf"/>
</dbReference>
<dbReference type="InterPro" id="IPR014729">
    <property type="entry name" value="Rossmann-like_a/b/a_fold"/>
</dbReference>
<dbReference type="InterPro" id="IPR020536">
    <property type="entry name" value="ThiI_AANH"/>
</dbReference>
<dbReference type="InterPro" id="IPR054173">
    <property type="entry name" value="ThiI_fer"/>
</dbReference>
<dbReference type="InterPro" id="IPR049961">
    <property type="entry name" value="ThiI_N"/>
</dbReference>
<dbReference type="InterPro" id="IPR026340">
    <property type="entry name" value="THII_Thiazole_biosynth_dom"/>
</dbReference>
<dbReference type="InterPro" id="IPR004114">
    <property type="entry name" value="THUMP_dom"/>
</dbReference>
<dbReference type="InterPro" id="IPR049962">
    <property type="entry name" value="THUMP_ThiI"/>
</dbReference>
<dbReference type="InterPro" id="IPR003720">
    <property type="entry name" value="tRNA_STrfase"/>
</dbReference>
<dbReference type="InterPro" id="IPR050102">
    <property type="entry name" value="tRNA_sulfurtransferase_ThiI"/>
</dbReference>
<dbReference type="NCBIfam" id="TIGR04271">
    <property type="entry name" value="ThiI_C_thiazole"/>
    <property type="match status" value="1"/>
</dbReference>
<dbReference type="NCBIfam" id="TIGR00342">
    <property type="entry name" value="tRNA uracil 4-sulfurtransferase ThiI"/>
    <property type="match status" value="1"/>
</dbReference>
<dbReference type="PANTHER" id="PTHR43209">
    <property type="entry name" value="TRNA SULFURTRANSFERASE"/>
    <property type="match status" value="1"/>
</dbReference>
<dbReference type="PANTHER" id="PTHR43209:SF1">
    <property type="entry name" value="TRNA SULFURTRANSFERASE"/>
    <property type="match status" value="1"/>
</dbReference>
<dbReference type="Pfam" id="PF00581">
    <property type="entry name" value="Rhodanese"/>
    <property type="match status" value="1"/>
</dbReference>
<dbReference type="Pfam" id="PF02568">
    <property type="entry name" value="ThiI"/>
    <property type="match status" value="1"/>
</dbReference>
<dbReference type="Pfam" id="PF22025">
    <property type="entry name" value="ThiI_fer"/>
    <property type="match status" value="1"/>
</dbReference>
<dbReference type="Pfam" id="PF02926">
    <property type="entry name" value="THUMP"/>
    <property type="match status" value="1"/>
</dbReference>
<dbReference type="SMART" id="SM00981">
    <property type="entry name" value="THUMP"/>
    <property type="match status" value="1"/>
</dbReference>
<dbReference type="SUPFAM" id="SSF52402">
    <property type="entry name" value="Adenine nucleotide alpha hydrolases-like"/>
    <property type="match status" value="1"/>
</dbReference>
<dbReference type="SUPFAM" id="SSF52821">
    <property type="entry name" value="Rhodanese/Cell cycle control phosphatase"/>
    <property type="match status" value="1"/>
</dbReference>
<dbReference type="SUPFAM" id="SSF143437">
    <property type="entry name" value="THUMP domain-like"/>
    <property type="match status" value="1"/>
</dbReference>
<dbReference type="PROSITE" id="PS50206">
    <property type="entry name" value="RHODANESE_3"/>
    <property type="match status" value="1"/>
</dbReference>
<dbReference type="PROSITE" id="PS51165">
    <property type="entry name" value="THUMP"/>
    <property type="match status" value="1"/>
</dbReference>